<organism>
    <name type="scientific">Staphylothermus marinus (strain ATCC 43588 / DSM 3639 / JCM 9404 / F1)</name>
    <dbReference type="NCBI Taxonomy" id="399550"/>
    <lineage>
        <taxon>Archaea</taxon>
        <taxon>Thermoproteota</taxon>
        <taxon>Thermoprotei</taxon>
        <taxon>Desulfurococcales</taxon>
        <taxon>Desulfurococcaceae</taxon>
        <taxon>Staphylothermus</taxon>
    </lineage>
</organism>
<evidence type="ECO:0000255" key="1">
    <source>
        <dbReference type="HAMAP-Rule" id="MF_00306"/>
    </source>
</evidence>
<sequence>MVLDGVRKALSRFLSGKGDYERAVKEFIRDLQKELIKADVNVKLVLELTKKIRERALKEEPPPGITRREWFVNIVYEELSKFFGGDKKPDIKPKKKPWVMLLVGLQGSGKTTTAAKLAYYYKLEGYRVGLVAADTYRPAAYDQLKQLGEQIGVPVYGEPDNKDAVEIARRGVEYFVSRGFDIVIVDTAGRHHREEDLLREMREIAENIKPDEVVLVIDAAIGQQAHDLAKKFHEATPIGSIIVTKLDGTAKGGGALSAVAVTGATIKFIGTGEKIDELEVFRPPRFVARILGIGDLEGLIEKVRRIKVEFTEKDVEEFLSGRLNMRLVYKQLVSLRKMGPLRKILQMIPGLSLKIPLEIEAGKAEEKIKKWLAIINSMTYEELDKPEIIDRRRIRRIAYGAGVKPEDVRELLKQYEMMKKLSKQLRKRRDLLEKLQLGFKP</sequence>
<reference key="1">
    <citation type="journal article" date="2009" name="BMC Genomics">
        <title>The complete genome sequence of Staphylothermus marinus reveals differences in sulfur metabolism among heterotrophic Crenarchaeota.</title>
        <authorList>
            <person name="Anderson I.J."/>
            <person name="Dharmarajan L."/>
            <person name="Rodriguez J."/>
            <person name="Hooper S."/>
            <person name="Porat I."/>
            <person name="Ulrich L.E."/>
            <person name="Elkins J.G."/>
            <person name="Mavromatis K."/>
            <person name="Sun H."/>
            <person name="Land M."/>
            <person name="Lapidus A."/>
            <person name="Lucas S."/>
            <person name="Barry K."/>
            <person name="Huber H."/>
            <person name="Zhulin I.B."/>
            <person name="Whitman W.B."/>
            <person name="Mukhopadhyay B."/>
            <person name="Woese C."/>
            <person name="Bristow J."/>
            <person name="Kyrpides N."/>
        </authorList>
    </citation>
    <scope>NUCLEOTIDE SEQUENCE [LARGE SCALE GENOMIC DNA]</scope>
    <source>
        <strain>ATCC 43588 / DSM 3639 / JCM 9404 / F1</strain>
    </source>
</reference>
<reference key="2">
    <citation type="journal article" date="2009" name="Stand. Genomic Sci.">
        <title>Complete genome sequence of Staphylothermus marinus Stetter and Fiala 1986 type strain F1.</title>
        <authorList>
            <person name="Anderson I.J."/>
            <person name="Sun H."/>
            <person name="Lapidus A."/>
            <person name="Copeland A."/>
            <person name="Glavina Del Rio T."/>
            <person name="Tice H."/>
            <person name="Dalin E."/>
            <person name="Lucas S."/>
            <person name="Barry K."/>
            <person name="Land M."/>
            <person name="Richardson P."/>
            <person name="Huber H."/>
            <person name="Kyrpides N.C."/>
        </authorList>
    </citation>
    <scope>NUCLEOTIDE SEQUENCE [LARGE SCALE GENOMIC DNA]</scope>
    <source>
        <strain>ATCC 43588 / DSM 3639 / JCM 9404 / F1</strain>
    </source>
</reference>
<comment type="function">
    <text evidence="1">Involved in targeting and insertion of nascent membrane proteins into the cytoplasmic membrane. Binds to the hydrophobic signal sequence of the ribosome-nascent chain (RNC) as it emerges from the ribosomes. The SRP-RNC complex is then targeted to the cytoplasmic membrane where it interacts with the SRP receptor FtsY.</text>
</comment>
<comment type="catalytic activity">
    <reaction evidence="1">
        <text>GTP + H2O = GDP + phosphate + H(+)</text>
        <dbReference type="Rhea" id="RHEA:19669"/>
        <dbReference type="ChEBI" id="CHEBI:15377"/>
        <dbReference type="ChEBI" id="CHEBI:15378"/>
        <dbReference type="ChEBI" id="CHEBI:37565"/>
        <dbReference type="ChEBI" id="CHEBI:43474"/>
        <dbReference type="ChEBI" id="CHEBI:58189"/>
        <dbReference type="EC" id="3.6.5.4"/>
    </reaction>
</comment>
<comment type="subunit">
    <text evidence="1">Part of the signal recognition particle protein translocation system, which is composed of SRP and FtsY. Archaeal SRP consists of a 7S RNA molecule of 300 nucleotides and two protein subunits: SRP54 and SRP19.</text>
</comment>
<comment type="subcellular location">
    <subcellularLocation>
        <location evidence="1">Cytoplasm</location>
    </subcellularLocation>
    <text evidence="1">The SRP-RNC complex is targeted to the cytoplasmic membrane.</text>
</comment>
<comment type="domain">
    <text evidence="1">Composed of three domains: the N-terminal N domain, which is responsible for interactions with the ribosome, the central G domain, which binds GTP, and the C-terminal M domain, which binds the RNA and the signal sequence of the RNC.</text>
</comment>
<comment type="similarity">
    <text evidence="1">Belongs to the GTP-binding SRP family. SRP54 subfamily.</text>
</comment>
<name>SRP54_STAMF</name>
<proteinExistence type="inferred from homology"/>
<dbReference type="EC" id="3.6.5.4" evidence="1"/>
<dbReference type="EMBL" id="CP000575">
    <property type="protein sequence ID" value="ABN69873.1"/>
    <property type="molecule type" value="Genomic_DNA"/>
</dbReference>
<dbReference type="RefSeq" id="WP_011839064.1">
    <property type="nucleotide sequence ID" value="NC_009033.1"/>
</dbReference>
<dbReference type="SMR" id="A3DML3"/>
<dbReference type="STRING" id="399550.Smar_0772"/>
<dbReference type="GeneID" id="4906647"/>
<dbReference type="KEGG" id="smr:Smar_0772"/>
<dbReference type="eggNOG" id="arCOG01228">
    <property type="taxonomic scope" value="Archaea"/>
</dbReference>
<dbReference type="HOGENOM" id="CLU_009301_6_0_2"/>
<dbReference type="OrthoDB" id="52849at2157"/>
<dbReference type="Proteomes" id="UP000000254">
    <property type="component" value="Chromosome"/>
</dbReference>
<dbReference type="GO" id="GO:0048500">
    <property type="term" value="C:signal recognition particle"/>
    <property type="evidence" value="ECO:0007669"/>
    <property type="project" value="UniProtKB-UniRule"/>
</dbReference>
<dbReference type="GO" id="GO:0008312">
    <property type="term" value="F:7S RNA binding"/>
    <property type="evidence" value="ECO:0007669"/>
    <property type="project" value="UniProtKB-UniRule"/>
</dbReference>
<dbReference type="GO" id="GO:0016887">
    <property type="term" value="F:ATP hydrolysis activity"/>
    <property type="evidence" value="ECO:0007669"/>
    <property type="project" value="InterPro"/>
</dbReference>
<dbReference type="GO" id="GO:0005525">
    <property type="term" value="F:GTP binding"/>
    <property type="evidence" value="ECO:0007669"/>
    <property type="project" value="UniProtKB-UniRule"/>
</dbReference>
<dbReference type="GO" id="GO:0003924">
    <property type="term" value="F:GTPase activity"/>
    <property type="evidence" value="ECO:0007669"/>
    <property type="project" value="UniProtKB-UniRule"/>
</dbReference>
<dbReference type="GO" id="GO:0006614">
    <property type="term" value="P:SRP-dependent cotranslational protein targeting to membrane"/>
    <property type="evidence" value="ECO:0007669"/>
    <property type="project" value="InterPro"/>
</dbReference>
<dbReference type="CDD" id="cd17875">
    <property type="entry name" value="SRP54_G"/>
    <property type="match status" value="1"/>
</dbReference>
<dbReference type="FunFam" id="3.40.50.300:FF:000022">
    <property type="entry name" value="Signal recognition particle 54 kDa subunit"/>
    <property type="match status" value="1"/>
</dbReference>
<dbReference type="Gene3D" id="3.40.50.300">
    <property type="entry name" value="P-loop containing nucleotide triphosphate hydrolases"/>
    <property type="match status" value="1"/>
</dbReference>
<dbReference type="Gene3D" id="1.20.120.140">
    <property type="entry name" value="Signal recognition particle SRP54, nucleotide-binding domain"/>
    <property type="match status" value="1"/>
</dbReference>
<dbReference type="Gene3D" id="1.10.260.30">
    <property type="entry name" value="Signal recognition particle, SRP54 subunit, M-domain"/>
    <property type="match status" value="1"/>
</dbReference>
<dbReference type="HAMAP" id="MF_00306">
    <property type="entry name" value="SRP54"/>
    <property type="match status" value="1"/>
</dbReference>
<dbReference type="InterPro" id="IPR003593">
    <property type="entry name" value="AAA+_ATPase"/>
</dbReference>
<dbReference type="InterPro" id="IPR027417">
    <property type="entry name" value="P-loop_NTPase"/>
</dbReference>
<dbReference type="InterPro" id="IPR036891">
    <property type="entry name" value="Signal_recog_part_SRP54_M_sf"/>
</dbReference>
<dbReference type="InterPro" id="IPR013822">
    <property type="entry name" value="Signal_recog_particl_SRP54_hlx"/>
</dbReference>
<dbReference type="InterPro" id="IPR004125">
    <property type="entry name" value="Signal_recog_particle_SRP54_M"/>
</dbReference>
<dbReference type="InterPro" id="IPR036225">
    <property type="entry name" value="SRP/SRP_N"/>
</dbReference>
<dbReference type="InterPro" id="IPR022941">
    <property type="entry name" value="SRP54"/>
</dbReference>
<dbReference type="InterPro" id="IPR000897">
    <property type="entry name" value="SRP54_GTPase_dom"/>
</dbReference>
<dbReference type="InterPro" id="IPR042101">
    <property type="entry name" value="SRP54_N_sf"/>
</dbReference>
<dbReference type="PANTHER" id="PTHR11564">
    <property type="entry name" value="SIGNAL RECOGNITION PARTICLE 54K PROTEIN SRP54"/>
    <property type="match status" value="1"/>
</dbReference>
<dbReference type="PANTHER" id="PTHR11564:SF5">
    <property type="entry name" value="SIGNAL RECOGNITION PARTICLE SUBUNIT SRP54"/>
    <property type="match status" value="1"/>
</dbReference>
<dbReference type="Pfam" id="PF00448">
    <property type="entry name" value="SRP54"/>
    <property type="match status" value="1"/>
</dbReference>
<dbReference type="Pfam" id="PF02881">
    <property type="entry name" value="SRP54_N"/>
    <property type="match status" value="1"/>
</dbReference>
<dbReference type="Pfam" id="PF02978">
    <property type="entry name" value="SRP_SPB"/>
    <property type="match status" value="1"/>
</dbReference>
<dbReference type="SMART" id="SM00382">
    <property type="entry name" value="AAA"/>
    <property type="match status" value="1"/>
</dbReference>
<dbReference type="SMART" id="SM00962">
    <property type="entry name" value="SRP54"/>
    <property type="match status" value="1"/>
</dbReference>
<dbReference type="SMART" id="SM00963">
    <property type="entry name" value="SRP54_N"/>
    <property type="match status" value="1"/>
</dbReference>
<dbReference type="SUPFAM" id="SSF47364">
    <property type="entry name" value="Domain of the SRP/SRP receptor G-proteins"/>
    <property type="match status" value="1"/>
</dbReference>
<dbReference type="SUPFAM" id="SSF52540">
    <property type="entry name" value="P-loop containing nucleoside triphosphate hydrolases"/>
    <property type="match status" value="1"/>
</dbReference>
<dbReference type="SUPFAM" id="SSF47446">
    <property type="entry name" value="Signal peptide-binding domain"/>
    <property type="match status" value="1"/>
</dbReference>
<feature type="chain" id="PRO_0000322247" description="Signal recognition particle 54 kDa protein">
    <location>
        <begin position="1"/>
        <end position="441"/>
    </location>
</feature>
<feature type="binding site" evidence="1">
    <location>
        <begin position="104"/>
        <end position="111"/>
    </location>
    <ligand>
        <name>GTP</name>
        <dbReference type="ChEBI" id="CHEBI:37565"/>
    </ligand>
</feature>
<feature type="binding site" evidence="1">
    <location>
        <begin position="186"/>
        <end position="190"/>
    </location>
    <ligand>
        <name>GTP</name>
        <dbReference type="ChEBI" id="CHEBI:37565"/>
    </ligand>
</feature>
<feature type="binding site" evidence="1">
    <location>
        <begin position="244"/>
        <end position="247"/>
    </location>
    <ligand>
        <name>GTP</name>
        <dbReference type="ChEBI" id="CHEBI:37565"/>
    </ligand>
</feature>
<keyword id="KW-0963">Cytoplasm</keyword>
<keyword id="KW-0342">GTP-binding</keyword>
<keyword id="KW-0378">Hydrolase</keyword>
<keyword id="KW-0547">Nucleotide-binding</keyword>
<keyword id="KW-1185">Reference proteome</keyword>
<keyword id="KW-0687">Ribonucleoprotein</keyword>
<keyword id="KW-0694">RNA-binding</keyword>
<keyword id="KW-0733">Signal recognition particle</keyword>
<accession>A3DML3</accession>
<gene>
    <name evidence="1" type="primary">srp54</name>
    <name type="ordered locus">Smar_0772</name>
</gene>
<protein>
    <recommendedName>
        <fullName evidence="1">Signal recognition particle 54 kDa protein</fullName>
        <shortName evidence="1">SRP54</shortName>
        <ecNumber evidence="1">3.6.5.4</ecNumber>
    </recommendedName>
</protein>